<proteinExistence type="evidence at protein level"/>
<gene>
    <name evidence="7" type="primary">Hexb</name>
</gene>
<dbReference type="EC" id="3.2.1.52" evidence="5"/>
<dbReference type="EMBL" id="Y00964">
    <property type="protein sequence ID" value="CAA68781.1"/>
    <property type="molecule type" value="mRNA"/>
</dbReference>
<dbReference type="EMBL" id="U07633">
    <property type="protein sequence ID" value="AAA18776.1"/>
    <property type="molecule type" value="mRNA"/>
</dbReference>
<dbReference type="EMBL" id="U07049">
    <property type="protein sequence ID" value="AAA74738.1"/>
    <property type="molecule type" value="Genomic_DNA"/>
</dbReference>
<dbReference type="EMBL" id="U07036">
    <property type="protein sequence ID" value="AAA74738.1"/>
    <property type="status" value="JOINED"/>
    <property type="molecule type" value="Genomic_DNA"/>
</dbReference>
<dbReference type="EMBL" id="U07037">
    <property type="protein sequence ID" value="AAA74738.1"/>
    <property type="status" value="JOINED"/>
    <property type="molecule type" value="Genomic_DNA"/>
</dbReference>
<dbReference type="EMBL" id="U07038">
    <property type="protein sequence ID" value="AAA74738.1"/>
    <property type="status" value="JOINED"/>
    <property type="molecule type" value="Genomic_DNA"/>
</dbReference>
<dbReference type="EMBL" id="U07039">
    <property type="protein sequence ID" value="AAA74738.1"/>
    <property type="status" value="JOINED"/>
    <property type="molecule type" value="Genomic_DNA"/>
</dbReference>
<dbReference type="EMBL" id="U07040">
    <property type="protein sequence ID" value="AAA74738.1"/>
    <property type="status" value="JOINED"/>
    <property type="molecule type" value="Genomic_DNA"/>
</dbReference>
<dbReference type="EMBL" id="U07041">
    <property type="protein sequence ID" value="AAA74738.1"/>
    <property type="status" value="JOINED"/>
    <property type="molecule type" value="Genomic_DNA"/>
</dbReference>
<dbReference type="EMBL" id="U07042">
    <property type="protein sequence ID" value="AAA74738.1"/>
    <property type="status" value="JOINED"/>
    <property type="molecule type" value="Genomic_DNA"/>
</dbReference>
<dbReference type="EMBL" id="U07043">
    <property type="protein sequence ID" value="AAA74738.1"/>
    <property type="status" value="JOINED"/>
    <property type="molecule type" value="Genomic_DNA"/>
</dbReference>
<dbReference type="EMBL" id="U07044">
    <property type="protein sequence ID" value="AAA74738.1"/>
    <property type="status" value="JOINED"/>
    <property type="molecule type" value="Genomic_DNA"/>
</dbReference>
<dbReference type="EMBL" id="U07045">
    <property type="protein sequence ID" value="AAA74738.1"/>
    <property type="status" value="JOINED"/>
    <property type="molecule type" value="Genomic_DNA"/>
</dbReference>
<dbReference type="EMBL" id="U07046">
    <property type="protein sequence ID" value="AAA74738.1"/>
    <property type="status" value="JOINED"/>
    <property type="molecule type" value="Genomic_DNA"/>
</dbReference>
<dbReference type="EMBL" id="U07047">
    <property type="protein sequence ID" value="AAA74738.1"/>
    <property type="status" value="JOINED"/>
    <property type="molecule type" value="Genomic_DNA"/>
</dbReference>
<dbReference type="EMBL" id="U07048">
    <property type="protein sequence ID" value="AAA74738.1"/>
    <property type="status" value="JOINED"/>
    <property type="molecule type" value="Genomic_DNA"/>
</dbReference>
<dbReference type="EMBL" id="U07742">
    <property type="protein sequence ID" value="AAB60667.1"/>
    <property type="molecule type" value="Genomic_DNA"/>
</dbReference>
<dbReference type="EMBL" id="U07722">
    <property type="protein sequence ID" value="AAB60667.1"/>
    <property type="status" value="JOINED"/>
    <property type="molecule type" value="Genomic_DNA"/>
</dbReference>
<dbReference type="EMBL" id="U07723">
    <property type="protein sequence ID" value="AAB60667.1"/>
    <property type="status" value="JOINED"/>
    <property type="molecule type" value="Genomic_DNA"/>
</dbReference>
<dbReference type="EMBL" id="U07724">
    <property type="protein sequence ID" value="AAB60667.1"/>
    <property type="status" value="JOINED"/>
    <property type="molecule type" value="Genomic_DNA"/>
</dbReference>
<dbReference type="EMBL" id="U07725">
    <property type="protein sequence ID" value="AAB60667.1"/>
    <property type="status" value="JOINED"/>
    <property type="molecule type" value="Genomic_DNA"/>
</dbReference>
<dbReference type="EMBL" id="U07726">
    <property type="protein sequence ID" value="AAB60667.1"/>
    <property type="status" value="JOINED"/>
    <property type="molecule type" value="Genomic_DNA"/>
</dbReference>
<dbReference type="EMBL" id="U07727">
    <property type="protein sequence ID" value="AAB60667.1"/>
    <property type="status" value="JOINED"/>
    <property type="molecule type" value="Genomic_DNA"/>
</dbReference>
<dbReference type="EMBL" id="U07728">
    <property type="protein sequence ID" value="AAB60667.1"/>
    <property type="status" value="JOINED"/>
    <property type="molecule type" value="Genomic_DNA"/>
</dbReference>
<dbReference type="EMBL" id="U07737">
    <property type="protein sequence ID" value="AAB60667.1"/>
    <property type="status" value="JOINED"/>
    <property type="molecule type" value="Genomic_DNA"/>
</dbReference>
<dbReference type="EMBL" id="U07738">
    <property type="protein sequence ID" value="AAB60667.1"/>
    <property type="status" value="JOINED"/>
    <property type="molecule type" value="Genomic_DNA"/>
</dbReference>
<dbReference type="EMBL" id="U07739">
    <property type="protein sequence ID" value="AAB60667.1"/>
    <property type="status" value="JOINED"/>
    <property type="molecule type" value="Genomic_DNA"/>
</dbReference>
<dbReference type="EMBL" id="U07740">
    <property type="protein sequence ID" value="AAB60667.1"/>
    <property type="status" value="JOINED"/>
    <property type="molecule type" value="Genomic_DNA"/>
</dbReference>
<dbReference type="EMBL" id="U07741">
    <property type="protein sequence ID" value="AAB60667.1"/>
    <property type="status" value="JOINED"/>
    <property type="molecule type" value="Genomic_DNA"/>
</dbReference>
<dbReference type="CCDS" id="CCDS26709.1"/>
<dbReference type="PIR" id="B54745">
    <property type="entry name" value="B54745"/>
</dbReference>
<dbReference type="RefSeq" id="NP_034552.1">
    <property type="nucleotide sequence ID" value="NM_010422.2"/>
</dbReference>
<dbReference type="SMR" id="P20060"/>
<dbReference type="BioGRID" id="200281">
    <property type="interactions" value="15"/>
</dbReference>
<dbReference type="ComplexPortal" id="CPX-689">
    <property type="entry name" value="Beta-hexosaminidase A complex"/>
</dbReference>
<dbReference type="ComplexPortal" id="CPX-690">
    <property type="entry name" value="Beta-hexosaminidase B complex"/>
</dbReference>
<dbReference type="FunCoup" id="P20060">
    <property type="interactions" value="1297"/>
</dbReference>
<dbReference type="STRING" id="10090.ENSMUSP00000022169"/>
<dbReference type="CAZy" id="GH20">
    <property type="family name" value="Glycoside Hydrolase Family 20"/>
</dbReference>
<dbReference type="GlyConnect" id="2152">
    <property type="glycosylation" value="2 N-Linked glycans (1 site)"/>
</dbReference>
<dbReference type="GlyCosmos" id="P20060">
    <property type="glycosylation" value="3 sites, 2 glycans"/>
</dbReference>
<dbReference type="GlyGen" id="P20060">
    <property type="glycosylation" value="5 sites, 4 N-linked glycans (3 sites), 1 O-linked glycan (2 sites)"/>
</dbReference>
<dbReference type="iPTMnet" id="P20060"/>
<dbReference type="PhosphoSitePlus" id="P20060"/>
<dbReference type="SwissPalm" id="P20060"/>
<dbReference type="jPOST" id="P20060"/>
<dbReference type="PaxDb" id="10090-ENSMUSP00000022169"/>
<dbReference type="PeptideAtlas" id="P20060"/>
<dbReference type="ProteomicsDB" id="269660"/>
<dbReference type="Pumba" id="P20060"/>
<dbReference type="Antibodypedia" id="24338">
    <property type="antibodies" value="255 antibodies from 34 providers"/>
</dbReference>
<dbReference type="DNASU" id="15212"/>
<dbReference type="Ensembl" id="ENSMUST00000022169.10">
    <property type="protein sequence ID" value="ENSMUSP00000022169.8"/>
    <property type="gene ID" value="ENSMUSG00000021665.10"/>
</dbReference>
<dbReference type="GeneID" id="15212"/>
<dbReference type="KEGG" id="mmu:15212"/>
<dbReference type="UCSC" id="uc007roc.2">
    <property type="organism name" value="mouse"/>
</dbReference>
<dbReference type="AGR" id="MGI:96074"/>
<dbReference type="CTD" id="3074"/>
<dbReference type="MGI" id="MGI:96074">
    <property type="gene designation" value="Hexb"/>
</dbReference>
<dbReference type="VEuPathDB" id="HostDB:ENSMUSG00000021665"/>
<dbReference type="eggNOG" id="KOG2499">
    <property type="taxonomic scope" value="Eukaryota"/>
</dbReference>
<dbReference type="GeneTree" id="ENSGT00390000008107"/>
<dbReference type="HOGENOM" id="CLU_007082_0_3_1"/>
<dbReference type="InParanoid" id="P20060"/>
<dbReference type="OMA" id="GHDVVMC"/>
<dbReference type="OrthoDB" id="428480at2759"/>
<dbReference type="PhylomeDB" id="P20060"/>
<dbReference type="TreeFam" id="TF313036"/>
<dbReference type="Reactome" id="R-MMU-2022857">
    <property type="pathway name" value="Keratan sulfate degradation"/>
</dbReference>
<dbReference type="Reactome" id="R-MMU-2024101">
    <property type="pathway name" value="CS/DS degradation"/>
</dbReference>
<dbReference type="Reactome" id="R-MMU-2160916">
    <property type="pathway name" value="Hyaluronan uptake and degradation"/>
</dbReference>
<dbReference type="Reactome" id="R-MMU-6798695">
    <property type="pathway name" value="Neutrophil degranulation"/>
</dbReference>
<dbReference type="Reactome" id="R-MMU-9840310">
    <property type="pathway name" value="Glycosphingolipid catabolism"/>
</dbReference>
<dbReference type="BioGRID-ORCS" id="15212">
    <property type="hits" value="2 hits in 79 CRISPR screens"/>
</dbReference>
<dbReference type="ChiTaRS" id="Hexb">
    <property type="organism name" value="mouse"/>
</dbReference>
<dbReference type="PRO" id="PR:P20060"/>
<dbReference type="Proteomes" id="UP000000589">
    <property type="component" value="Chromosome 13"/>
</dbReference>
<dbReference type="RNAct" id="P20060">
    <property type="molecule type" value="protein"/>
</dbReference>
<dbReference type="Bgee" id="ENSMUSG00000021665">
    <property type="expression patterns" value="Expressed in lacrimal gland and 242 other cell types or tissues"/>
</dbReference>
<dbReference type="ExpressionAtlas" id="P20060">
    <property type="expression patterns" value="baseline and differential"/>
</dbReference>
<dbReference type="GO" id="GO:0001669">
    <property type="term" value="C:acrosomal vesicle"/>
    <property type="evidence" value="ECO:0000314"/>
    <property type="project" value="MGI"/>
</dbReference>
<dbReference type="GO" id="GO:0042582">
    <property type="term" value="C:azurophil granule"/>
    <property type="evidence" value="ECO:0007669"/>
    <property type="project" value="Ensembl"/>
</dbReference>
<dbReference type="GO" id="GO:1905379">
    <property type="term" value="C:beta-N-acetylhexosaminidase complex"/>
    <property type="evidence" value="ECO:0000266"/>
    <property type="project" value="ComplexPortal"/>
</dbReference>
<dbReference type="GO" id="GO:0060473">
    <property type="term" value="C:cortical granule"/>
    <property type="evidence" value="ECO:0000314"/>
    <property type="project" value="UniProtKB"/>
</dbReference>
<dbReference type="GO" id="GO:0005615">
    <property type="term" value="C:extracellular space"/>
    <property type="evidence" value="ECO:0000314"/>
    <property type="project" value="MGI"/>
</dbReference>
<dbReference type="GO" id="GO:0043202">
    <property type="term" value="C:lysosomal lumen"/>
    <property type="evidence" value="ECO:0000303"/>
    <property type="project" value="ComplexPortal"/>
</dbReference>
<dbReference type="GO" id="GO:0005764">
    <property type="term" value="C:lysosome"/>
    <property type="evidence" value="ECO:0000314"/>
    <property type="project" value="MGI"/>
</dbReference>
<dbReference type="GO" id="GO:0016020">
    <property type="term" value="C:membrane"/>
    <property type="evidence" value="ECO:0000314"/>
    <property type="project" value="MGI"/>
</dbReference>
<dbReference type="GO" id="GO:0008375">
    <property type="term" value="F:acetylglucosaminyltransferase activity"/>
    <property type="evidence" value="ECO:0007669"/>
    <property type="project" value="Ensembl"/>
</dbReference>
<dbReference type="GO" id="GO:0016231">
    <property type="term" value="F:beta-N-acetylglucosaminidase activity"/>
    <property type="evidence" value="ECO:0007669"/>
    <property type="project" value="Ensembl"/>
</dbReference>
<dbReference type="GO" id="GO:0004563">
    <property type="term" value="F:beta-N-acetylhexosaminidase activity"/>
    <property type="evidence" value="ECO:0000314"/>
    <property type="project" value="UniProtKB"/>
</dbReference>
<dbReference type="GO" id="GO:0030246">
    <property type="term" value="F:carbohydrate binding"/>
    <property type="evidence" value="ECO:0007669"/>
    <property type="project" value="Ensembl"/>
</dbReference>
<dbReference type="GO" id="GO:0015929">
    <property type="term" value="F:hexosaminidase activity"/>
    <property type="evidence" value="ECO:0000315"/>
    <property type="project" value="MGI"/>
</dbReference>
<dbReference type="GO" id="GO:0016787">
    <property type="term" value="F:hydrolase activity"/>
    <property type="evidence" value="ECO:0000314"/>
    <property type="project" value="MGI"/>
</dbReference>
<dbReference type="GO" id="GO:0042802">
    <property type="term" value="F:identical protein binding"/>
    <property type="evidence" value="ECO:0000353"/>
    <property type="project" value="MGI"/>
</dbReference>
<dbReference type="GO" id="GO:0044877">
    <property type="term" value="F:protein-containing complex binding"/>
    <property type="evidence" value="ECO:0007669"/>
    <property type="project" value="Ensembl"/>
</dbReference>
<dbReference type="GO" id="GO:0043615">
    <property type="term" value="P:astrocyte cell migration"/>
    <property type="evidence" value="ECO:0000315"/>
    <property type="project" value="UniProtKB"/>
</dbReference>
<dbReference type="GO" id="GO:0030207">
    <property type="term" value="P:chondroitin sulfate proteoglycan catabolic process"/>
    <property type="evidence" value="ECO:0000315"/>
    <property type="project" value="MGI"/>
</dbReference>
<dbReference type="GO" id="GO:0030209">
    <property type="term" value="P:dermatan sulfate proteoglycan catabolic process"/>
    <property type="evidence" value="ECO:0000316"/>
    <property type="project" value="MGI"/>
</dbReference>
<dbReference type="GO" id="GO:0006689">
    <property type="term" value="P:ganglioside catabolic process"/>
    <property type="evidence" value="ECO:0000315"/>
    <property type="project" value="MGI"/>
</dbReference>
<dbReference type="GO" id="GO:0030203">
    <property type="term" value="P:glycosaminoglycan metabolic process"/>
    <property type="evidence" value="ECO:0000315"/>
    <property type="project" value="ComplexPortal"/>
</dbReference>
<dbReference type="GO" id="GO:0006687">
    <property type="term" value="P:glycosphingolipid metabolic process"/>
    <property type="evidence" value="ECO:0000315"/>
    <property type="project" value="MGI"/>
</dbReference>
<dbReference type="GO" id="GO:0030214">
    <property type="term" value="P:hyaluronan catabolic process"/>
    <property type="evidence" value="ECO:0000315"/>
    <property type="project" value="MGI"/>
</dbReference>
<dbReference type="GO" id="GO:0006874">
    <property type="term" value="P:intracellular calcium ion homeostasis"/>
    <property type="evidence" value="ECO:0000315"/>
    <property type="project" value="MGI"/>
</dbReference>
<dbReference type="GO" id="GO:0019915">
    <property type="term" value="P:lipid storage"/>
    <property type="evidence" value="ECO:0000315"/>
    <property type="project" value="MGI"/>
</dbReference>
<dbReference type="GO" id="GO:0007626">
    <property type="term" value="P:locomotory behavior"/>
    <property type="evidence" value="ECO:0000315"/>
    <property type="project" value="MGI"/>
</dbReference>
<dbReference type="GO" id="GO:0007040">
    <property type="term" value="P:lysosome organization"/>
    <property type="evidence" value="ECO:0000315"/>
    <property type="project" value="MGI"/>
</dbReference>
<dbReference type="GO" id="GO:0008049">
    <property type="term" value="P:male courtship behavior"/>
    <property type="evidence" value="ECO:0000315"/>
    <property type="project" value="MGI"/>
</dbReference>
<dbReference type="GO" id="GO:0042552">
    <property type="term" value="P:myelination"/>
    <property type="evidence" value="ECO:0000316"/>
    <property type="project" value="MGI"/>
</dbReference>
<dbReference type="GO" id="GO:0006044">
    <property type="term" value="P:N-acetylglucosamine metabolic process"/>
    <property type="evidence" value="ECO:0007669"/>
    <property type="project" value="Ensembl"/>
</dbReference>
<dbReference type="GO" id="GO:0050905">
    <property type="term" value="P:neuromuscular process"/>
    <property type="evidence" value="ECO:0000315"/>
    <property type="project" value="MGI"/>
</dbReference>
<dbReference type="GO" id="GO:0050885">
    <property type="term" value="P:neuromuscular process controlling balance"/>
    <property type="evidence" value="ECO:0000315"/>
    <property type="project" value="MGI"/>
</dbReference>
<dbReference type="GO" id="GO:0070050">
    <property type="term" value="P:neuron cellular homeostasis"/>
    <property type="evidence" value="ECO:0000315"/>
    <property type="project" value="MGI"/>
</dbReference>
<dbReference type="GO" id="GO:0009313">
    <property type="term" value="P:oligosaccharide catabolic process"/>
    <property type="evidence" value="ECO:0000315"/>
    <property type="project" value="MGI"/>
</dbReference>
<dbReference type="GO" id="GO:0048477">
    <property type="term" value="P:oogenesis"/>
    <property type="evidence" value="ECO:0000315"/>
    <property type="project" value="MGI"/>
</dbReference>
<dbReference type="GO" id="GO:0007341">
    <property type="term" value="P:penetration of zona pellucida"/>
    <property type="evidence" value="ECO:0000315"/>
    <property type="project" value="MGI"/>
</dbReference>
<dbReference type="GO" id="GO:0008654">
    <property type="term" value="P:phospholipid biosynthetic process"/>
    <property type="evidence" value="ECO:0000315"/>
    <property type="project" value="MGI"/>
</dbReference>
<dbReference type="GO" id="GO:0045944">
    <property type="term" value="P:positive regulation of transcription by RNA polymerase II"/>
    <property type="evidence" value="ECO:0000315"/>
    <property type="project" value="UniProtKB"/>
</dbReference>
<dbReference type="GO" id="GO:0008360">
    <property type="term" value="P:regulation of cell shape"/>
    <property type="evidence" value="ECO:0000315"/>
    <property type="project" value="UniProtKB"/>
</dbReference>
<dbReference type="GO" id="GO:0019222">
    <property type="term" value="P:regulation of metabolic process"/>
    <property type="evidence" value="ECO:0000315"/>
    <property type="project" value="MGI"/>
</dbReference>
<dbReference type="GO" id="GO:0007605">
    <property type="term" value="P:sensory perception of sound"/>
    <property type="evidence" value="ECO:0000316"/>
    <property type="project" value="MGI"/>
</dbReference>
<dbReference type="GO" id="GO:0019953">
    <property type="term" value="P:sexual reproduction"/>
    <property type="evidence" value="ECO:0000315"/>
    <property type="project" value="MGI"/>
</dbReference>
<dbReference type="GO" id="GO:0007338">
    <property type="term" value="P:single fertilization"/>
    <property type="evidence" value="ECO:0000314"/>
    <property type="project" value="UniProtKB"/>
</dbReference>
<dbReference type="GO" id="GO:0001501">
    <property type="term" value="P:skeletal system development"/>
    <property type="evidence" value="ECO:0000316"/>
    <property type="project" value="MGI"/>
</dbReference>
<dbReference type="CDD" id="cd06562">
    <property type="entry name" value="GH20_HexA_HexB-like"/>
    <property type="match status" value="1"/>
</dbReference>
<dbReference type="FunFam" id="3.20.20.80:FF:000049">
    <property type="entry name" value="Beta-hexosaminidase A"/>
    <property type="match status" value="1"/>
</dbReference>
<dbReference type="FunFam" id="3.30.379.10:FF:000001">
    <property type="entry name" value="Beta-hexosaminidase subunit beta"/>
    <property type="match status" value="1"/>
</dbReference>
<dbReference type="Gene3D" id="3.30.379.10">
    <property type="entry name" value="Chitobiase/beta-hexosaminidase domain 2-like"/>
    <property type="match status" value="1"/>
</dbReference>
<dbReference type="Gene3D" id="3.20.20.80">
    <property type="entry name" value="Glycosidases"/>
    <property type="match status" value="1"/>
</dbReference>
<dbReference type="InterPro" id="IPR025705">
    <property type="entry name" value="Beta_hexosaminidase_sua/sub"/>
</dbReference>
<dbReference type="InterPro" id="IPR015883">
    <property type="entry name" value="Glyco_hydro_20_cat"/>
</dbReference>
<dbReference type="InterPro" id="IPR017853">
    <property type="entry name" value="Glycoside_hydrolase_SF"/>
</dbReference>
<dbReference type="InterPro" id="IPR029018">
    <property type="entry name" value="Hex-like_dom2"/>
</dbReference>
<dbReference type="InterPro" id="IPR029019">
    <property type="entry name" value="HEX_eukaryotic_N"/>
</dbReference>
<dbReference type="PANTHER" id="PTHR22600">
    <property type="entry name" value="BETA-HEXOSAMINIDASE"/>
    <property type="match status" value="1"/>
</dbReference>
<dbReference type="PANTHER" id="PTHR22600:SF38">
    <property type="entry name" value="BETA-HEXOSAMINIDASE SUBUNIT BETA"/>
    <property type="match status" value="1"/>
</dbReference>
<dbReference type="Pfam" id="PF00728">
    <property type="entry name" value="Glyco_hydro_20"/>
    <property type="match status" value="1"/>
</dbReference>
<dbReference type="Pfam" id="PF14845">
    <property type="entry name" value="Glycohydro_20b2"/>
    <property type="match status" value="1"/>
</dbReference>
<dbReference type="PIRSF" id="PIRSF001093">
    <property type="entry name" value="B-hxosamndse_ab_euk"/>
    <property type="match status" value="1"/>
</dbReference>
<dbReference type="PRINTS" id="PR00738">
    <property type="entry name" value="GLHYDRLASE20"/>
</dbReference>
<dbReference type="SUPFAM" id="SSF51445">
    <property type="entry name" value="(Trans)glycosidases"/>
    <property type="match status" value="1"/>
</dbReference>
<dbReference type="SUPFAM" id="SSF55545">
    <property type="entry name" value="beta-N-acetylhexosaminidase-like domain"/>
    <property type="match status" value="1"/>
</dbReference>
<organism>
    <name type="scientific">Mus musculus</name>
    <name type="common">Mouse</name>
    <dbReference type="NCBI Taxonomy" id="10090"/>
    <lineage>
        <taxon>Eukaryota</taxon>
        <taxon>Metazoa</taxon>
        <taxon>Chordata</taxon>
        <taxon>Craniata</taxon>
        <taxon>Vertebrata</taxon>
        <taxon>Euteleostomi</taxon>
        <taxon>Mammalia</taxon>
        <taxon>Eutheria</taxon>
        <taxon>Euarchontoglires</taxon>
        <taxon>Glires</taxon>
        <taxon>Rodentia</taxon>
        <taxon>Myomorpha</taxon>
        <taxon>Muroidea</taxon>
        <taxon>Muridae</taxon>
        <taxon>Murinae</taxon>
        <taxon>Mus</taxon>
        <taxon>Mus</taxon>
    </lineage>
</organism>
<comment type="function">
    <text evidence="3 5">Hydrolyzes the non-reducing end N-acetyl-D-hexosamine and/or sulfated N-acetyl-D-hexosamine of glycoconjugates, such as the oligosaccharide moieties from proteins and neutral glycolipids, or from certain mucopolysaccharides. The isozyme B does not hydrolyze each of these substrates, however hydrolyzes efficiently neutral oligosaccharide. Only the isozyme A is responsible for the degradation of GM2 gangliosides in the presence of GM2A. During fertilization is responsible, at least in part, for the zona block to polyspermy. Present in the cortical granules of non-activated oocytes, is exocytosed during the cortical reaction in response to oocyte activation and inactivates the sperm galactosyltransferase-binding site, accounting for the block in sperm binding to the zona pellucida (PubMed:8253842).</text>
</comment>
<comment type="catalytic activity">
    <reaction evidence="5">
        <text>Hydrolysis of terminal non-reducing N-acetyl-D-hexosamine residues in N-acetyl-beta-D-hexosaminides.</text>
        <dbReference type="EC" id="3.2.1.52"/>
    </reaction>
</comment>
<comment type="catalytic activity">
    <reaction evidence="3">
        <text>N-acetyl-beta-D-galactosaminyl-(1-&gt;4)-beta-D-3-sulfogalactosyl-(1-&gt;4)-beta-D-glucosyl-(1&lt;-&gt;1')-ceramide + H2O = a beta-D-3-sulfogalactosyl-(1-&gt;4)-beta-D-glucosyl-(1&lt;-&gt;1')-ceramide + N-acetyl-beta-D-galactosamine</text>
        <dbReference type="Rhea" id="RHEA:48276"/>
        <dbReference type="ChEBI" id="CHEBI:15377"/>
        <dbReference type="ChEBI" id="CHEBI:28497"/>
        <dbReference type="ChEBI" id="CHEBI:90163"/>
        <dbReference type="ChEBI" id="CHEBI:90164"/>
    </reaction>
    <physiologicalReaction direction="left-to-right" evidence="3">
        <dbReference type="Rhea" id="RHEA:48277"/>
    </physiologicalReaction>
</comment>
<comment type="catalytic activity">
    <reaction evidence="3">
        <text>a ganglioside GM2 (d18:1(4E)) + H2O = a ganglioside GM3 (d18:1(4E)) + N-acetyl-beta-D-galactosamine</text>
        <dbReference type="Rhea" id="RHEA:47940"/>
        <dbReference type="ChEBI" id="CHEBI:15377"/>
        <dbReference type="ChEBI" id="CHEBI:28497"/>
        <dbReference type="ChEBI" id="CHEBI:60065"/>
        <dbReference type="ChEBI" id="CHEBI:71502"/>
    </reaction>
    <physiologicalReaction direction="left-to-right" evidence="3">
        <dbReference type="Rhea" id="RHEA:47941"/>
    </physiologicalReaction>
</comment>
<comment type="catalytic activity">
    <reaction evidence="3">
        <text>a ganglioside GM2 + H2O = a ganglioside GM3 + N-acetyl-beta-D-galactosamine</text>
        <dbReference type="Rhea" id="RHEA:47968"/>
        <dbReference type="ChEBI" id="CHEBI:15377"/>
        <dbReference type="ChEBI" id="CHEBI:28497"/>
        <dbReference type="ChEBI" id="CHEBI:79210"/>
        <dbReference type="ChEBI" id="CHEBI:79218"/>
    </reaction>
    <physiologicalReaction direction="left-to-right" evidence="3">
        <dbReference type="Rhea" id="RHEA:47969"/>
    </physiologicalReaction>
</comment>
<comment type="catalytic activity">
    <reaction evidence="3">
        <text>beta-D-GalNAc-(1-&gt;4)-alpha-L-IdoA-(1-&gt;3)-beta-D-GalNAc-4-sulfate-(1-&gt;4)-alpha-L-IdoA-(1-&gt;3)-D-GalNAc-4-sulfate + H2O = alpha-L-IdoA-(1-&gt;3)-beta-D-GalNAc-4-sulfate-(1-&gt;4)-alpha-L-IdoA-(1-&gt;3)-D-GalNAc-4-sulfate + N-acetyl-D-galactosamine</text>
        <dbReference type="Rhea" id="RHEA:64372"/>
        <dbReference type="ChEBI" id="CHEBI:15377"/>
        <dbReference type="ChEBI" id="CHEBI:28037"/>
        <dbReference type="ChEBI" id="CHEBI:152565"/>
        <dbReference type="ChEBI" id="CHEBI:152566"/>
    </reaction>
    <physiologicalReaction direction="left-to-right" evidence="3">
        <dbReference type="Rhea" id="RHEA:64373"/>
    </physiologicalReaction>
</comment>
<comment type="catalytic activity">
    <reaction evidence="3">
        <text>N-acetyl-beta-D-6-sulfogalactosaminyl-(1-&gt;4)-alpha-L-iduronyl-(1-&gt;3)-N-acetyl-D-6-sulfogalactosamine + H2O = alpha-L-iduronyl-(1-&gt;3)-N-acetyl-D-6-sulfogalactosamine + N-acetyl-D-6-sulfogalactosamine</text>
        <dbReference type="Rhea" id="RHEA:64384"/>
        <dbReference type="ChEBI" id="CHEBI:15377"/>
        <dbReference type="ChEBI" id="CHEBI:152567"/>
        <dbReference type="ChEBI" id="CHEBI:152568"/>
        <dbReference type="ChEBI" id="CHEBI:153064"/>
    </reaction>
    <physiologicalReaction direction="left-to-right" evidence="3">
        <dbReference type="Rhea" id="RHEA:64385"/>
    </physiologicalReaction>
</comment>
<comment type="activity regulation">
    <text evidence="3">Addition of GM2A stimulates the hydrolysis of sulfated glycosphingolipid SM2 and the ganglioside GM2.</text>
</comment>
<comment type="subunit">
    <text evidence="2 3">There are 3 forms of beta-hexosaminidase: hexosaminidase A is a heterodimer composed of one subunit alpha and one subunit beta (chain A and B); hexosaminidase B is a homodimer of two beta subunits (two chains A and B); hexosaminidase S is a homodimer of two alpha subunits (By similarity). The composition of the dimer (isozyme A versus isozyme S) has a significant effect on the substrate specificity of the alpha subunit active site (By similarity).</text>
</comment>
<comment type="subcellular location">
    <subcellularLocation>
        <location evidence="3">Lysosome</location>
    </subcellularLocation>
    <subcellularLocation>
        <location evidence="5">Cytoplasmic vesicle</location>
        <location evidence="5">Secretory vesicle</location>
        <location evidence="5">Cortical granule</location>
    </subcellularLocation>
    <text evidence="5">In oocytes, the enzyme is released from cortical granules after fertilization.</text>
</comment>
<comment type="similarity">
    <text evidence="6">Belongs to the glycosyl hydrolase 20 family.</text>
</comment>
<sequence>MPQSPRSAPGLLLLQALVSLVSLALVAPARLQPALWPFPRSVQMFPRLLYISAEDFSIDHSPNSTAGPSCSLLQEAFRRYYNYVFGFYKRHHGPARFRAEPQLQKLLVSITLESECESFPSLSSDETYSLLVQEPVAVLKANSVWGALRGLETFSQLVYQDSFGTFTINESSIADSPRFPHRGILIDTSRHFLPVKTILKTLDAMAFNKFNVLHWHIVDDQSFPYQSTTFPELSNKGSYSLSHVYTPNDVRMVLEYARLRGIRVIPEFDTPGHTQSWGKGQKNLLTPCYNQKTKTQVFGPVDPTVNTTYAFFNTFFKEISSVFPDQFIHLGGDEVEFQCWASNPNIQGFMKRKGFGSDFRRLESFYIKKILEIISSLKKNSIVWQEVFDDKVELQPGTVVEVWKSEHYSYELKQVTGSGFPAILSAPWYLDLISYGQDWKNYYKVEPLNFEGSEKQKQLVIGGEACLWGEFVDATNLTPRLWPRASAVGERLWSPKTVTDLENAYKRLAVHRCRMVSRGIAAQPLYTGYCNYENKI</sequence>
<accession>P20060</accession>
<name>HEXB_MOUSE</name>
<keyword id="KW-0968">Cytoplasmic vesicle</keyword>
<keyword id="KW-1015">Disulfide bond</keyword>
<keyword id="KW-0325">Glycoprotein</keyword>
<keyword id="KW-0326">Glycosidase</keyword>
<keyword id="KW-0378">Hydrolase</keyword>
<keyword id="KW-0443">Lipid metabolism</keyword>
<keyword id="KW-0458">Lysosome</keyword>
<keyword id="KW-1185">Reference proteome</keyword>
<keyword id="KW-0732">Signal</keyword>
<protein>
    <recommendedName>
        <fullName evidence="6">Beta-hexosaminidase subunit beta</fullName>
        <ecNumber evidence="5">3.2.1.52</ecNumber>
    </recommendedName>
    <alternativeName>
        <fullName>Beta-N-acetylhexosaminidase subunit beta</fullName>
        <shortName>Hexosaminidase subunit B</shortName>
    </alternativeName>
    <alternativeName>
        <fullName>N-acetyl-beta-glucosaminidase subunit beta</fullName>
    </alternativeName>
</protein>
<reference key="1">
    <citation type="journal article" date="1988" name="FEBS Lett.">
        <title>Cloning and sequence analysis of a cDNA encoding the beta-subunit of mouse beta-hexosaminidase.</title>
        <authorList>
            <person name="Bapat B."/>
            <person name="Ethier M."/>
            <person name="Neote K."/>
            <person name="Mahuran D."/>
            <person name="Gravel R.A."/>
        </authorList>
    </citation>
    <scope>NUCLEOTIDE SEQUENCE [MRNA]</scope>
</reference>
<reference key="2">
    <citation type="journal article" date="1994" name="Genomics">
        <title>Structure and expression of the mouse beta-hexosaminidase genes, Hexa and Hexb.</title>
        <authorList>
            <person name="Yamanaka S."/>
            <person name="Johnson O.N."/>
            <person name="Norflus F."/>
            <person name="Boles D.J."/>
            <person name="Proia R.L."/>
        </authorList>
    </citation>
    <scope>NUCLEOTIDE SEQUENCE [GENOMIC DNA]</scope>
    <source>
        <strain>C57BL/6 X CBA</strain>
        <tissue>Liver</tissue>
    </source>
</reference>
<reference key="3">
    <citation type="journal article" date="1994" name="Biochim. Biophys. Acta">
        <title>Characterization of the murine beta-hexosaminidase (HEXB) gene.</title>
        <authorList>
            <person name="Triggs-Raine B.L."/>
            <person name="Benoit G."/>
            <person name="Salo T.J."/>
            <person name="Trasler J.M."/>
            <person name="Gravel R.A."/>
        </authorList>
    </citation>
    <scope>NUCLEOTIDE SEQUENCE [GENOMIC DNA]</scope>
    <source>
        <strain>129/Sv</strain>
    </source>
</reference>
<reference key="4">
    <citation type="journal article" date="1993" name="J. Cell Biol.">
        <title>Egg cortical granule N-acetylglucosaminidase is required for the mouse zona block to polyspermy.</title>
        <authorList>
            <person name="Miller D.J."/>
            <person name="Gong X."/>
            <person name="Decker G."/>
            <person name="Shur B.D."/>
        </authorList>
    </citation>
    <scope>FUNCTION</scope>
    <scope>CATALYTIC ACTIVITY</scope>
    <scope>SUBCELLULAR LOCATION</scope>
</reference>
<reference key="5">
    <citation type="journal article" date="2010" name="Cell">
        <title>A tissue-specific atlas of mouse protein phosphorylation and expression.</title>
        <authorList>
            <person name="Huttlin E.L."/>
            <person name="Jedrychowski M.P."/>
            <person name="Elias J.E."/>
            <person name="Goswami T."/>
            <person name="Rad R."/>
            <person name="Beausoleil S.A."/>
            <person name="Villen J."/>
            <person name="Haas W."/>
            <person name="Sowa M.E."/>
            <person name="Gygi S.P."/>
        </authorList>
    </citation>
    <scope>IDENTIFICATION BY MASS SPECTROMETRY [LARGE SCALE ANALYSIS]</scope>
    <source>
        <tissue>Brain</tissue>
        <tissue>Kidney</tissue>
        <tissue>Spleen</tissue>
        <tissue>Testis</tissue>
    </source>
</reference>
<evidence type="ECO:0000250" key="1"/>
<evidence type="ECO:0000250" key="2">
    <source>
        <dbReference type="UniProtKB" id="P06865"/>
    </source>
</evidence>
<evidence type="ECO:0000250" key="3">
    <source>
        <dbReference type="UniProtKB" id="P07686"/>
    </source>
</evidence>
<evidence type="ECO:0000255" key="4"/>
<evidence type="ECO:0000269" key="5">
    <source>
    </source>
</evidence>
<evidence type="ECO:0000305" key="6"/>
<evidence type="ECO:0000312" key="7">
    <source>
        <dbReference type="MGI" id="MGI:96074"/>
    </source>
</evidence>
<feature type="signal peptide" evidence="4">
    <location>
        <begin position="1"/>
        <end position="31"/>
    </location>
</feature>
<feature type="chain" id="PRO_0000012006" description="Beta-hexosaminidase subunit beta">
    <location>
        <begin position="32"/>
        <end position="536"/>
    </location>
</feature>
<feature type="active site" description="Proton donor" evidence="1">
    <location>
        <position position="334"/>
    </location>
</feature>
<feature type="glycosylation site" description="N-linked (GlcNAc...) asparagine" evidence="4">
    <location>
        <position position="63"/>
    </location>
</feature>
<feature type="glycosylation site" description="N-linked (GlcNAc...) asparagine" evidence="4">
    <location>
        <position position="169"/>
    </location>
</feature>
<feature type="glycosylation site" description="N-linked (GlcNAc...) asparagine" evidence="4">
    <location>
        <position position="306"/>
    </location>
</feature>
<feature type="disulfide bond" evidence="1">
    <location>
        <begin position="70"/>
        <end position="116"/>
    </location>
</feature>
<feature type="disulfide bond" evidence="1">
    <location>
        <begin position="288"/>
        <end position="339"/>
    </location>
</feature>
<feature type="disulfide bond" evidence="1">
    <location>
        <begin position="513"/>
        <end position="530"/>
    </location>
</feature>